<proteinExistence type="inferred from homology"/>
<evidence type="ECO:0000255" key="1">
    <source>
        <dbReference type="HAMAP-Rule" id="MF_00057"/>
    </source>
</evidence>
<feature type="chain" id="PRO_0000370154" description="8-amino-3,8-dideoxy-manno-octulosonate cytidylyltransferase">
    <location>
        <begin position="1"/>
        <end position="245"/>
    </location>
</feature>
<gene>
    <name evidence="1" type="primary">kdsB</name>
    <name type="ordered locus">swp_2705</name>
</gene>
<keyword id="KW-0963">Cytoplasm</keyword>
<keyword id="KW-0448">Lipopolysaccharide biosynthesis</keyword>
<keyword id="KW-0548">Nucleotidyltransferase</keyword>
<keyword id="KW-0808">Transferase</keyword>
<dbReference type="EC" id="2.7.7.90" evidence="1"/>
<dbReference type="EMBL" id="CP000472">
    <property type="protein sequence ID" value="ACJ29436.1"/>
    <property type="molecule type" value="Genomic_DNA"/>
</dbReference>
<dbReference type="RefSeq" id="WP_020912792.1">
    <property type="nucleotide sequence ID" value="NC_011566.1"/>
</dbReference>
<dbReference type="SMR" id="B8CMP6"/>
<dbReference type="STRING" id="225849.swp_2705"/>
<dbReference type="KEGG" id="swp:swp_2705"/>
<dbReference type="eggNOG" id="COG1212">
    <property type="taxonomic scope" value="Bacteria"/>
</dbReference>
<dbReference type="HOGENOM" id="CLU_065038_0_1_6"/>
<dbReference type="OrthoDB" id="9815559at2"/>
<dbReference type="UniPathway" id="UPA00030"/>
<dbReference type="Proteomes" id="UP000000753">
    <property type="component" value="Chromosome"/>
</dbReference>
<dbReference type="GO" id="GO:0005829">
    <property type="term" value="C:cytosol"/>
    <property type="evidence" value="ECO:0007669"/>
    <property type="project" value="TreeGrafter"/>
</dbReference>
<dbReference type="GO" id="GO:0008690">
    <property type="term" value="F:3-deoxy-manno-octulosonate cytidylyltransferase activity"/>
    <property type="evidence" value="ECO:0007669"/>
    <property type="project" value="InterPro"/>
</dbReference>
<dbReference type="GO" id="GO:0009103">
    <property type="term" value="P:lipopolysaccharide biosynthetic process"/>
    <property type="evidence" value="ECO:0007669"/>
    <property type="project" value="UniProtKB-UniRule"/>
</dbReference>
<dbReference type="CDD" id="cd02517">
    <property type="entry name" value="CMP-KDO-Synthetase"/>
    <property type="match status" value="1"/>
</dbReference>
<dbReference type="FunFam" id="3.90.550.10:FF:000011">
    <property type="entry name" value="3-deoxy-manno-octulosonate cytidylyltransferase"/>
    <property type="match status" value="1"/>
</dbReference>
<dbReference type="Gene3D" id="3.90.550.10">
    <property type="entry name" value="Spore Coat Polysaccharide Biosynthesis Protein SpsA, Chain A"/>
    <property type="match status" value="1"/>
</dbReference>
<dbReference type="HAMAP" id="MF_00057">
    <property type="entry name" value="KdsB"/>
    <property type="match status" value="1"/>
</dbReference>
<dbReference type="InterPro" id="IPR003329">
    <property type="entry name" value="Cytidylyl_trans"/>
</dbReference>
<dbReference type="InterPro" id="IPR004528">
    <property type="entry name" value="KdsB"/>
</dbReference>
<dbReference type="InterPro" id="IPR029044">
    <property type="entry name" value="Nucleotide-diphossugar_trans"/>
</dbReference>
<dbReference type="NCBIfam" id="TIGR00466">
    <property type="entry name" value="kdsB"/>
    <property type="match status" value="1"/>
</dbReference>
<dbReference type="NCBIfam" id="NF003950">
    <property type="entry name" value="PRK05450.1-3"/>
    <property type="match status" value="1"/>
</dbReference>
<dbReference type="NCBIfam" id="NF003952">
    <property type="entry name" value="PRK05450.1-5"/>
    <property type="match status" value="1"/>
</dbReference>
<dbReference type="NCBIfam" id="NF009905">
    <property type="entry name" value="PRK13368.1"/>
    <property type="match status" value="1"/>
</dbReference>
<dbReference type="PANTHER" id="PTHR42866">
    <property type="entry name" value="3-DEOXY-MANNO-OCTULOSONATE CYTIDYLYLTRANSFERASE"/>
    <property type="match status" value="1"/>
</dbReference>
<dbReference type="PANTHER" id="PTHR42866:SF2">
    <property type="entry name" value="3-DEOXY-MANNO-OCTULOSONATE CYTIDYLYLTRANSFERASE, MITOCHONDRIAL"/>
    <property type="match status" value="1"/>
</dbReference>
<dbReference type="Pfam" id="PF02348">
    <property type="entry name" value="CTP_transf_3"/>
    <property type="match status" value="1"/>
</dbReference>
<dbReference type="SUPFAM" id="SSF53448">
    <property type="entry name" value="Nucleotide-diphospho-sugar transferases"/>
    <property type="match status" value="1"/>
</dbReference>
<accession>B8CMP6</accession>
<protein>
    <recommendedName>
        <fullName evidence="1">8-amino-3,8-dideoxy-manno-octulosonate cytidylyltransferase</fullName>
        <ecNumber evidence="1">2.7.7.90</ecNumber>
    </recommendedName>
    <alternativeName>
        <fullName evidence="1">CMP-8-amino-3,8-dideoxy-manno-octulosonate synthase</fullName>
    </alternativeName>
</protein>
<sequence length="245" mass="27347">MNVTLLIPARYGSSRFPGKPLAPINGKPMIQHVYERASLAKGLTDIYVATDDDRIKDAVEGFGGKVVMTSAEAASGTDRIEDAITQLGLAEDDLVVNLQGDQPLIDPISIEQIISLFERHPGEFGMATLGFQITEEEELNDPKHVKLVFDNEFNALYFSRARIPFGRDTDDYPVYKHLGVYAYTRKFVQTFAKLPLGRLEDLEKLEQLRALEHGHKIKVAISAFDSPEVDTPEDIRICEARLAVD</sequence>
<comment type="function">
    <text evidence="1">Activates KDO8N (a required 8-carbon sugar) for incorporation into bacterial lipopolysaccharide in the Shewanella genus.</text>
</comment>
<comment type="catalytic activity">
    <reaction evidence="1">
        <text>8-amino-3,8-dideoxy-alpha-D-manno-octulosonate + CTP = CMP-8-amino-3,8-dideoxy-alpha-D-manno-oct-2-ulosonate + diphosphate</text>
        <dbReference type="Rhea" id="RHEA:49284"/>
        <dbReference type="ChEBI" id="CHEBI:33019"/>
        <dbReference type="ChEBI" id="CHEBI:37563"/>
        <dbReference type="ChEBI" id="CHEBI:87091"/>
        <dbReference type="ChEBI" id="CHEBI:91089"/>
        <dbReference type="EC" id="2.7.7.90"/>
    </reaction>
</comment>
<comment type="pathway">
    <text evidence="1">Bacterial outer membrane biogenesis; lipopolysaccharide biosynthesis.</text>
</comment>
<comment type="subcellular location">
    <subcellularLocation>
        <location evidence="1">Cytoplasm</location>
    </subcellularLocation>
</comment>
<comment type="similarity">
    <text evidence="1">Belongs to the KdsB family.</text>
</comment>
<reference key="1">
    <citation type="journal article" date="2008" name="PLoS ONE">
        <title>Environmental adaptation: genomic analysis of the piezotolerant and psychrotolerant deep-sea iron reducing bacterium Shewanella piezotolerans WP3.</title>
        <authorList>
            <person name="Wang F."/>
            <person name="Wang J."/>
            <person name="Jian H."/>
            <person name="Zhang B."/>
            <person name="Li S."/>
            <person name="Wang F."/>
            <person name="Zeng X."/>
            <person name="Gao L."/>
            <person name="Bartlett D.H."/>
            <person name="Yu J."/>
            <person name="Hu S."/>
            <person name="Xiao X."/>
        </authorList>
    </citation>
    <scope>NUCLEOTIDE SEQUENCE [LARGE SCALE GENOMIC DNA]</scope>
    <source>
        <strain>WP3 / JCM 13877</strain>
    </source>
</reference>
<name>KDSB_SHEPW</name>
<organism>
    <name type="scientific">Shewanella piezotolerans (strain WP3 / JCM 13877)</name>
    <dbReference type="NCBI Taxonomy" id="225849"/>
    <lineage>
        <taxon>Bacteria</taxon>
        <taxon>Pseudomonadati</taxon>
        <taxon>Pseudomonadota</taxon>
        <taxon>Gammaproteobacteria</taxon>
        <taxon>Alteromonadales</taxon>
        <taxon>Shewanellaceae</taxon>
        <taxon>Shewanella</taxon>
    </lineage>
</organism>